<proteinExistence type="inferred from homology"/>
<reference key="1">
    <citation type="submission" date="2006-12" db="EMBL/GenBank/DDBJ databases">
        <title>Complete sequence of chromosome 1 of Nocardioides sp. JS614.</title>
        <authorList>
            <person name="Copeland A."/>
            <person name="Lucas S."/>
            <person name="Lapidus A."/>
            <person name="Barry K."/>
            <person name="Detter J.C."/>
            <person name="Glavina del Rio T."/>
            <person name="Hammon N."/>
            <person name="Israni S."/>
            <person name="Dalin E."/>
            <person name="Tice H."/>
            <person name="Pitluck S."/>
            <person name="Thompson L.S."/>
            <person name="Brettin T."/>
            <person name="Bruce D."/>
            <person name="Han C."/>
            <person name="Tapia R."/>
            <person name="Schmutz J."/>
            <person name="Larimer F."/>
            <person name="Land M."/>
            <person name="Hauser L."/>
            <person name="Kyrpides N."/>
            <person name="Kim E."/>
            <person name="Mattes T."/>
            <person name="Gossett J."/>
            <person name="Richardson P."/>
        </authorList>
    </citation>
    <scope>NUCLEOTIDE SEQUENCE [LARGE SCALE GENOMIC DNA]</scope>
    <source>
        <strain>ATCC BAA-499 / JS614</strain>
    </source>
</reference>
<gene>
    <name evidence="1" type="primary">proS</name>
    <name type="ordered locus">Noca_3197</name>
</gene>
<name>SYP_NOCSJ</name>
<organism>
    <name type="scientific">Nocardioides sp. (strain ATCC BAA-499 / JS614)</name>
    <dbReference type="NCBI Taxonomy" id="196162"/>
    <lineage>
        <taxon>Bacteria</taxon>
        <taxon>Bacillati</taxon>
        <taxon>Actinomycetota</taxon>
        <taxon>Actinomycetes</taxon>
        <taxon>Propionibacteriales</taxon>
        <taxon>Nocardioidaceae</taxon>
        <taxon>Nocardioides</taxon>
    </lineage>
</organism>
<dbReference type="EC" id="6.1.1.15" evidence="1"/>
<dbReference type="EMBL" id="CP000509">
    <property type="protein sequence ID" value="ABL82699.1"/>
    <property type="molecule type" value="Genomic_DNA"/>
</dbReference>
<dbReference type="RefSeq" id="WP_011756633.1">
    <property type="nucleotide sequence ID" value="NC_008699.1"/>
</dbReference>
<dbReference type="SMR" id="A1SLL4"/>
<dbReference type="STRING" id="196162.Noca_3197"/>
<dbReference type="KEGG" id="nca:Noca_3197"/>
<dbReference type="eggNOG" id="COG0442">
    <property type="taxonomic scope" value="Bacteria"/>
</dbReference>
<dbReference type="HOGENOM" id="CLU_016739_0_0_11"/>
<dbReference type="OrthoDB" id="9809052at2"/>
<dbReference type="Proteomes" id="UP000000640">
    <property type="component" value="Chromosome"/>
</dbReference>
<dbReference type="GO" id="GO:0005829">
    <property type="term" value="C:cytosol"/>
    <property type="evidence" value="ECO:0007669"/>
    <property type="project" value="TreeGrafter"/>
</dbReference>
<dbReference type="GO" id="GO:0002161">
    <property type="term" value="F:aminoacyl-tRNA deacylase activity"/>
    <property type="evidence" value="ECO:0007669"/>
    <property type="project" value="InterPro"/>
</dbReference>
<dbReference type="GO" id="GO:0005524">
    <property type="term" value="F:ATP binding"/>
    <property type="evidence" value="ECO:0007669"/>
    <property type="project" value="UniProtKB-UniRule"/>
</dbReference>
<dbReference type="GO" id="GO:0004827">
    <property type="term" value="F:proline-tRNA ligase activity"/>
    <property type="evidence" value="ECO:0007669"/>
    <property type="project" value="UniProtKB-UniRule"/>
</dbReference>
<dbReference type="GO" id="GO:0006433">
    <property type="term" value="P:prolyl-tRNA aminoacylation"/>
    <property type="evidence" value="ECO:0007669"/>
    <property type="project" value="UniProtKB-UniRule"/>
</dbReference>
<dbReference type="CDD" id="cd00861">
    <property type="entry name" value="ProRS_anticodon_short"/>
    <property type="match status" value="1"/>
</dbReference>
<dbReference type="CDD" id="cd00779">
    <property type="entry name" value="ProRS_core_prok"/>
    <property type="match status" value="1"/>
</dbReference>
<dbReference type="FunFam" id="3.30.930.10:FF:000065">
    <property type="entry name" value="Proline--tRNA ligase"/>
    <property type="match status" value="1"/>
</dbReference>
<dbReference type="FunFam" id="3.30.930.10:FF:000070">
    <property type="entry name" value="Proline--tRNA ligase"/>
    <property type="match status" value="1"/>
</dbReference>
<dbReference type="Gene3D" id="3.40.50.800">
    <property type="entry name" value="Anticodon-binding domain"/>
    <property type="match status" value="1"/>
</dbReference>
<dbReference type="Gene3D" id="3.30.930.10">
    <property type="entry name" value="Bira Bifunctional Protein, Domain 2"/>
    <property type="match status" value="2"/>
</dbReference>
<dbReference type="Gene3D" id="3.90.960.10">
    <property type="entry name" value="YbaK/aminoacyl-tRNA synthetase-associated domain"/>
    <property type="match status" value="1"/>
</dbReference>
<dbReference type="HAMAP" id="MF_01569">
    <property type="entry name" value="Pro_tRNA_synth_type1"/>
    <property type="match status" value="1"/>
</dbReference>
<dbReference type="InterPro" id="IPR002314">
    <property type="entry name" value="aa-tRNA-synt_IIb"/>
</dbReference>
<dbReference type="InterPro" id="IPR006195">
    <property type="entry name" value="aa-tRNA-synth_II"/>
</dbReference>
<dbReference type="InterPro" id="IPR045864">
    <property type="entry name" value="aa-tRNA-synth_II/BPL/LPL"/>
</dbReference>
<dbReference type="InterPro" id="IPR004154">
    <property type="entry name" value="Anticodon-bd"/>
</dbReference>
<dbReference type="InterPro" id="IPR036621">
    <property type="entry name" value="Anticodon-bd_dom_sf"/>
</dbReference>
<dbReference type="InterPro" id="IPR002316">
    <property type="entry name" value="Pro-tRNA-ligase_IIa"/>
</dbReference>
<dbReference type="InterPro" id="IPR004500">
    <property type="entry name" value="Pro-tRNA-synth_IIa_bac-type"/>
</dbReference>
<dbReference type="InterPro" id="IPR023717">
    <property type="entry name" value="Pro-tRNA-Synthase_IIa_type1"/>
</dbReference>
<dbReference type="InterPro" id="IPR050062">
    <property type="entry name" value="Pro-tRNA_synthetase"/>
</dbReference>
<dbReference type="InterPro" id="IPR044140">
    <property type="entry name" value="ProRS_anticodon_short"/>
</dbReference>
<dbReference type="InterPro" id="IPR033730">
    <property type="entry name" value="ProRS_core_prok"/>
</dbReference>
<dbReference type="InterPro" id="IPR036754">
    <property type="entry name" value="YbaK/aa-tRNA-synt-asso_dom_sf"/>
</dbReference>
<dbReference type="InterPro" id="IPR007214">
    <property type="entry name" value="YbaK/aa-tRNA-synth-assoc-dom"/>
</dbReference>
<dbReference type="NCBIfam" id="NF006625">
    <property type="entry name" value="PRK09194.1"/>
    <property type="match status" value="1"/>
</dbReference>
<dbReference type="NCBIfam" id="TIGR00409">
    <property type="entry name" value="proS_fam_II"/>
    <property type="match status" value="1"/>
</dbReference>
<dbReference type="PANTHER" id="PTHR42753">
    <property type="entry name" value="MITOCHONDRIAL RIBOSOME PROTEIN L39/PROLYL-TRNA LIGASE FAMILY MEMBER"/>
    <property type="match status" value="1"/>
</dbReference>
<dbReference type="PANTHER" id="PTHR42753:SF2">
    <property type="entry name" value="PROLINE--TRNA LIGASE"/>
    <property type="match status" value="1"/>
</dbReference>
<dbReference type="Pfam" id="PF03129">
    <property type="entry name" value="HGTP_anticodon"/>
    <property type="match status" value="1"/>
</dbReference>
<dbReference type="Pfam" id="PF00587">
    <property type="entry name" value="tRNA-synt_2b"/>
    <property type="match status" value="1"/>
</dbReference>
<dbReference type="Pfam" id="PF04073">
    <property type="entry name" value="tRNA_edit"/>
    <property type="match status" value="1"/>
</dbReference>
<dbReference type="PRINTS" id="PR01046">
    <property type="entry name" value="TRNASYNTHPRO"/>
</dbReference>
<dbReference type="SUPFAM" id="SSF52954">
    <property type="entry name" value="Class II aaRS ABD-related"/>
    <property type="match status" value="1"/>
</dbReference>
<dbReference type="SUPFAM" id="SSF55681">
    <property type="entry name" value="Class II aaRS and biotin synthetases"/>
    <property type="match status" value="1"/>
</dbReference>
<dbReference type="SUPFAM" id="SSF55826">
    <property type="entry name" value="YbaK/ProRS associated domain"/>
    <property type="match status" value="1"/>
</dbReference>
<dbReference type="PROSITE" id="PS50862">
    <property type="entry name" value="AA_TRNA_LIGASE_II"/>
    <property type="match status" value="1"/>
</dbReference>
<sequence length="589" mass="64583">MIMRMSSLFVRTLREDPADAEVPSHRLLVRAGYIRRAAPGIYTWLPLGLRVLRKIENVIREEMDAIGAQEMLFPALLPREPYEATNRWTEYGDGIFRLQDRKGADYLLGPTHEEMFTLVVKDLYSSYKDLPLSIYQIQTKYRDEARPRAGLLRGREFVMKDSYSFDVDDAGLDVSYQKHRDAYVRIFDRLGFEYVIVEAMSGAMGGSKSEEFLAKASVGEDTYVRCTLCDYAANVEAVHSPPIPPVPYDDAPAAHAEQTPDTPTIETLVAHLNERFPREDRPWAASDTLKNVVFSVHHPDGATEALAVGLPGDREVDAKRLEAHLGEGVVFEPFGEADFAARPTLAKGYIGPGALGEKKPAGVRYLLDPRVVEGTRWVTGADAAGSHVIDLVAGRDFSGDGLIEVAEVRDGDPCPRGDGGTLETARGIEMGHIFQLGRKYADALDLKVLDEQGKLVTVTMGSYGIGPSRAVAAIAEGTHDELGLAWPREVAPADVHIVATGKDEHVFAAAERIAHELDKQGVEVLYDDRPKVSPGVKFKDAELIGVPTIVVVGKGLAAGTIEVKDRRTGQRQDVPADHLVDRVIAIVRA</sequence>
<protein>
    <recommendedName>
        <fullName evidence="1">Proline--tRNA ligase</fullName>
        <ecNumber evidence="1">6.1.1.15</ecNumber>
    </recommendedName>
    <alternativeName>
        <fullName evidence="1">Prolyl-tRNA synthetase</fullName>
        <shortName evidence="1">ProRS</shortName>
    </alternativeName>
</protein>
<keyword id="KW-0030">Aminoacyl-tRNA synthetase</keyword>
<keyword id="KW-0067">ATP-binding</keyword>
<keyword id="KW-0963">Cytoplasm</keyword>
<keyword id="KW-0436">Ligase</keyword>
<keyword id="KW-0547">Nucleotide-binding</keyword>
<keyword id="KW-0648">Protein biosynthesis</keyword>
<keyword id="KW-1185">Reference proteome</keyword>
<accession>A1SLL4</accession>
<feature type="chain" id="PRO_0000288357" description="Proline--tRNA ligase">
    <location>
        <begin position="1"/>
        <end position="589"/>
    </location>
</feature>
<evidence type="ECO:0000255" key="1">
    <source>
        <dbReference type="HAMAP-Rule" id="MF_01569"/>
    </source>
</evidence>
<comment type="function">
    <text evidence="1">Catalyzes the attachment of proline to tRNA(Pro) in a two-step reaction: proline is first activated by ATP to form Pro-AMP and then transferred to the acceptor end of tRNA(Pro). As ProRS can inadvertently accommodate and process non-cognate amino acids such as alanine and cysteine, to avoid such errors it has two additional distinct editing activities against alanine. One activity is designated as 'pretransfer' editing and involves the tRNA(Pro)-independent hydrolysis of activated Ala-AMP. The other activity is designated 'posttransfer' editing and involves deacylation of mischarged Ala-tRNA(Pro). The misacylated Cys-tRNA(Pro) is not edited by ProRS.</text>
</comment>
<comment type="catalytic activity">
    <reaction evidence="1">
        <text>tRNA(Pro) + L-proline + ATP = L-prolyl-tRNA(Pro) + AMP + diphosphate</text>
        <dbReference type="Rhea" id="RHEA:14305"/>
        <dbReference type="Rhea" id="RHEA-COMP:9700"/>
        <dbReference type="Rhea" id="RHEA-COMP:9702"/>
        <dbReference type="ChEBI" id="CHEBI:30616"/>
        <dbReference type="ChEBI" id="CHEBI:33019"/>
        <dbReference type="ChEBI" id="CHEBI:60039"/>
        <dbReference type="ChEBI" id="CHEBI:78442"/>
        <dbReference type="ChEBI" id="CHEBI:78532"/>
        <dbReference type="ChEBI" id="CHEBI:456215"/>
        <dbReference type="EC" id="6.1.1.15"/>
    </reaction>
</comment>
<comment type="subunit">
    <text evidence="1">Homodimer.</text>
</comment>
<comment type="subcellular location">
    <subcellularLocation>
        <location evidence="1">Cytoplasm</location>
    </subcellularLocation>
</comment>
<comment type="domain">
    <text evidence="1">Consists of three domains: the N-terminal catalytic domain, the editing domain and the C-terminal anticodon-binding domain.</text>
</comment>
<comment type="similarity">
    <text evidence="1">Belongs to the class-II aminoacyl-tRNA synthetase family. ProS type 1 subfamily.</text>
</comment>